<protein>
    <recommendedName>
        <fullName evidence="1">Large ribosomal subunit protein bL9</fullName>
    </recommendedName>
    <alternativeName>
        <fullName evidence="2">50S ribosomal protein L9</fullName>
    </alternativeName>
</protein>
<accession>Q5WWL7</accession>
<sequence>MEVILLEKVRNLGNLGDKVHVKSGYGRNYLIPQNKAVFATEQNIELFEKRRAELEKKAQQNLANAEQRAAKLNDTTIVISAMASDEGKLYGSVGVNEIKDALIEKQIEISKREIVMPEGPLHSIGNYVVEVHVHSDVVANLQVEIIPAK</sequence>
<gene>
    <name evidence="1" type="primary">rplI</name>
    <name type="ordered locus">lpl1436</name>
</gene>
<dbReference type="EMBL" id="CR628337">
    <property type="protein sequence ID" value="CAH15676.1"/>
    <property type="molecule type" value="Genomic_DNA"/>
</dbReference>
<dbReference type="RefSeq" id="WP_011215489.1">
    <property type="nucleotide sequence ID" value="NC_006369.1"/>
</dbReference>
<dbReference type="SMR" id="Q5WWL7"/>
<dbReference type="KEGG" id="lpf:lpl1436"/>
<dbReference type="LegioList" id="lpl1436"/>
<dbReference type="HOGENOM" id="CLU_078938_4_1_6"/>
<dbReference type="Proteomes" id="UP000002517">
    <property type="component" value="Chromosome"/>
</dbReference>
<dbReference type="GO" id="GO:1990904">
    <property type="term" value="C:ribonucleoprotein complex"/>
    <property type="evidence" value="ECO:0007669"/>
    <property type="project" value="UniProtKB-KW"/>
</dbReference>
<dbReference type="GO" id="GO:0005840">
    <property type="term" value="C:ribosome"/>
    <property type="evidence" value="ECO:0007669"/>
    <property type="project" value="UniProtKB-KW"/>
</dbReference>
<dbReference type="GO" id="GO:0019843">
    <property type="term" value="F:rRNA binding"/>
    <property type="evidence" value="ECO:0007669"/>
    <property type="project" value="UniProtKB-UniRule"/>
</dbReference>
<dbReference type="GO" id="GO:0003735">
    <property type="term" value="F:structural constituent of ribosome"/>
    <property type="evidence" value="ECO:0007669"/>
    <property type="project" value="InterPro"/>
</dbReference>
<dbReference type="GO" id="GO:0006412">
    <property type="term" value="P:translation"/>
    <property type="evidence" value="ECO:0007669"/>
    <property type="project" value="UniProtKB-UniRule"/>
</dbReference>
<dbReference type="Gene3D" id="3.10.430.100">
    <property type="entry name" value="Ribosomal protein L9, C-terminal domain"/>
    <property type="match status" value="1"/>
</dbReference>
<dbReference type="Gene3D" id="3.40.5.10">
    <property type="entry name" value="Ribosomal protein L9, N-terminal domain"/>
    <property type="match status" value="1"/>
</dbReference>
<dbReference type="HAMAP" id="MF_00503">
    <property type="entry name" value="Ribosomal_bL9"/>
    <property type="match status" value="1"/>
</dbReference>
<dbReference type="InterPro" id="IPR000244">
    <property type="entry name" value="Ribosomal_bL9"/>
</dbReference>
<dbReference type="InterPro" id="IPR009027">
    <property type="entry name" value="Ribosomal_bL9/RNase_H1_N"/>
</dbReference>
<dbReference type="InterPro" id="IPR020594">
    <property type="entry name" value="Ribosomal_bL9_bac/chp"/>
</dbReference>
<dbReference type="InterPro" id="IPR020069">
    <property type="entry name" value="Ribosomal_bL9_C"/>
</dbReference>
<dbReference type="InterPro" id="IPR036791">
    <property type="entry name" value="Ribosomal_bL9_C_sf"/>
</dbReference>
<dbReference type="InterPro" id="IPR020070">
    <property type="entry name" value="Ribosomal_bL9_N"/>
</dbReference>
<dbReference type="InterPro" id="IPR036935">
    <property type="entry name" value="Ribosomal_bL9_N_sf"/>
</dbReference>
<dbReference type="NCBIfam" id="TIGR00158">
    <property type="entry name" value="L9"/>
    <property type="match status" value="1"/>
</dbReference>
<dbReference type="PANTHER" id="PTHR21368">
    <property type="entry name" value="50S RIBOSOMAL PROTEIN L9"/>
    <property type="match status" value="1"/>
</dbReference>
<dbReference type="Pfam" id="PF03948">
    <property type="entry name" value="Ribosomal_L9_C"/>
    <property type="match status" value="1"/>
</dbReference>
<dbReference type="Pfam" id="PF01281">
    <property type="entry name" value="Ribosomal_L9_N"/>
    <property type="match status" value="1"/>
</dbReference>
<dbReference type="SUPFAM" id="SSF55658">
    <property type="entry name" value="L9 N-domain-like"/>
    <property type="match status" value="1"/>
</dbReference>
<dbReference type="SUPFAM" id="SSF55653">
    <property type="entry name" value="Ribosomal protein L9 C-domain"/>
    <property type="match status" value="1"/>
</dbReference>
<dbReference type="PROSITE" id="PS00651">
    <property type="entry name" value="RIBOSOMAL_L9"/>
    <property type="match status" value="1"/>
</dbReference>
<evidence type="ECO:0000255" key="1">
    <source>
        <dbReference type="HAMAP-Rule" id="MF_00503"/>
    </source>
</evidence>
<evidence type="ECO:0000305" key="2"/>
<reference key="1">
    <citation type="journal article" date="2004" name="Nat. Genet.">
        <title>Evidence in the Legionella pneumophila genome for exploitation of host cell functions and high genome plasticity.</title>
        <authorList>
            <person name="Cazalet C."/>
            <person name="Rusniok C."/>
            <person name="Brueggemann H."/>
            <person name="Zidane N."/>
            <person name="Magnier A."/>
            <person name="Ma L."/>
            <person name="Tichit M."/>
            <person name="Jarraud S."/>
            <person name="Bouchier C."/>
            <person name="Vandenesch F."/>
            <person name="Kunst F."/>
            <person name="Etienne J."/>
            <person name="Glaser P."/>
            <person name="Buchrieser C."/>
        </authorList>
    </citation>
    <scope>NUCLEOTIDE SEQUENCE [LARGE SCALE GENOMIC DNA]</scope>
    <source>
        <strain>Lens</strain>
    </source>
</reference>
<feature type="chain" id="PRO_0000236537" description="Large ribosomal subunit protein bL9">
    <location>
        <begin position="1"/>
        <end position="149"/>
    </location>
</feature>
<comment type="function">
    <text evidence="1">Binds to the 23S rRNA.</text>
</comment>
<comment type="similarity">
    <text evidence="1">Belongs to the bacterial ribosomal protein bL9 family.</text>
</comment>
<name>RL9_LEGPL</name>
<keyword id="KW-0687">Ribonucleoprotein</keyword>
<keyword id="KW-0689">Ribosomal protein</keyword>
<keyword id="KW-0694">RNA-binding</keyword>
<keyword id="KW-0699">rRNA-binding</keyword>
<organism>
    <name type="scientific">Legionella pneumophila (strain Lens)</name>
    <dbReference type="NCBI Taxonomy" id="297245"/>
    <lineage>
        <taxon>Bacteria</taxon>
        <taxon>Pseudomonadati</taxon>
        <taxon>Pseudomonadota</taxon>
        <taxon>Gammaproteobacteria</taxon>
        <taxon>Legionellales</taxon>
        <taxon>Legionellaceae</taxon>
        <taxon>Legionella</taxon>
    </lineage>
</organism>
<proteinExistence type="inferred from homology"/>